<organism>
    <name type="scientific">Bacillus anthracis (strain A0248)</name>
    <dbReference type="NCBI Taxonomy" id="592021"/>
    <lineage>
        <taxon>Bacteria</taxon>
        <taxon>Bacillati</taxon>
        <taxon>Bacillota</taxon>
        <taxon>Bacilli</taxon>
        <taxon>Bacillales</taxon>
        <taxon>Bacillaceae</taxon>
        <taxon>Bacillus</taxon>
        <taxon>Bacillus cereus group</taxon>
    </lineage>
</organism>
<dbReference type="EMBL" id="CP001598">
    <property type="protein sequence ID" value="ACQ49474.1"/>
    <property type="molecule type" value="Genomic_DNA"/>
</dbReference>
<dbReference type="RefSeq" id="WP_001085872.1">
    <property type="nucleotide sequence ID" value="NC_012659.1"/>
</dbReference>
<dbReference type="SMR" id="C3P9P2"/>
<dbReference type="GeneID" id="93010956"/>
<dbReference type="KEGG" id="bai:BAA_0112"/>
<dbReference type="HOGENOM" id="CLU_074237_2_1_9"/>
<dbReference type="GO" id="GO:0022625">
    <property type="term" value="C:cytosolic large ribosomal subunit"/>
    <property type="evidence" value="ECO:0007669"/>
    <property type="project" value="TreeGrafter"/>
</dbReference>
<dbReference type="GO" id="GO:0070180">
    <property type="term" value="F:large ribosomal subunit rRNA binding"/>
    <property type="evidence" value="ECO:0007669"/>
    <property type="project" value="UniProtKB-UniRule"/>
</dbReference>
<dbReference type="GO" id="GO:0003735">
    <property type="term" value="F:structural constituent of ribosome"/>
    <property type="evidence" value="ECO:0007669"/>
    <property type="project" value="InterPro"/>
</dbReference>
<dbReference type="GO" id="GO:0006412">
    <property type="term" value="P:translation"/>
    <property type="evidence" value="ECO:0007669"/>
    <property type="project" value="UniProtKB-UniRule"/>
</dbReference>
<dbReference type="CDD" id="cd00349">
    <property type="entry name" value="Ribosomal_L11"/>
    <property type="match status" value="1"/>
</dbReference>
<dbReference type="FunFam" id="1.10.10.250:FF:000001">
    <property type="entry name" value="50S ribosomal protein L11"/>
    <property type="match status" value="1"/>
</dbReference>
<dbReference type="FunFam" id="3.30.1550.10:FF:000001">
    <property type="entry name" value="50S ribosomal protein L11"/>
    <property type="match status" value="1"/>
</dbReference>
<dbReference type="Gene3D" id="1.10.10.250">
    <property type="entry name" value="Ribosomal protein L11, C-terminal domain"/>
    <property type="match status" value="1"/>
</dbReference>
<dbReference type="Gene3D" id="3.30.1550.10">
    <property type="entry name" value="Ribosomal protein L11/L12, N-terminal domain"/>
    <property type="match status" value="1"/>
</dbReference>
<dbReference type="HAMAP" id="MF_00736">
    <property type="entry name" value="Ribosomal_uL11"/>
    <property type="match status" value="1"/>
</dbReference>
<dbReference type="InterPro" id="IPR000911">
    <property type="entry name" value="Ribosomal_uL11"/>
</dbReference>
<dbReference type="InterPro" id="IPR006519">
    <property type="entry name" value="Ribosomal_uL11_bac-typ"/>
</dbReference>
<dbReference type="InterPro" id="IPR020783">
    <property type="entry name" value="Ribosomal_uL11_C"/>
</dbReference>
<dbReference type="InterPro" id="IPR036769">
    <property type="entry name" value="Ribosomal_uL11_C_sf"/>
</dbReference>
<dbReference type="InterPro" id="IPR020785">
    <property type="entry name" value="Ribosomal_uL11_CS"/>
</dbReference>
<dbReference type="InterPro" id="IPR020784">
    <property type="entry name" value="Ribosomal_uL11_N"/>
</dbReference>
<dbReference type="InterPro" id="IPR036796">
    <property type="entry name" value="Ribosomal_uL11_N_sf"/>
</dbReference>
<dbReference type="NCBIfam" id="TIGR01632">
    <property type="entry name" value="L11_bact"/>
    <property type="match status" value="1"/>
</dbReference>
<dbReference type="PANTHER" id="PTHR11661">
    <property type="entry name" value="60S RIBOSOMAL PROTEIN L12"/>
    <property type="match status" value="1"/>
</dbReference>
<dbReference type="PANTHER" id="PTHR11661:SF1">
    <property type="entry name" value="LARGE RIBOSOMAL SUBUNIT PROTEIN UL11M"/>
    <property type="match status" value="1"/>
</dbReference>
<dbReference type="Pfam" id="PF00298">
    <property type="entry name" value="Ribosomal_L11"/>
    <property type="match status" value="1"/>
</dbReference>
<dbReference type="Pfam" id="PF03946">
    <property type="entry name" value="Ribosomal_L11_N"/>
    <property type="match status" value="1"/>
</dbReference>
<dbReference type="SMART" id="SM00649">
    <property type="entry name" value="RL11"/>
    <property type="match status" value="1"/>
</dbReference>
<dbReference type="SUPFAM" id="SSF54747">
    <property type="entry name" value="Ribosomal L11/L12e N-terminal domain"/>
    <property type="match status" value="1"/>
</dbReference>
<dbReference type="SUPFAM" id="SSF46906">
    <property type="entry name" value="Ribosomal protein L11, C-terminal domain"/>
    <property type="match status" value="1"/>
</dbReference>
<dbReference type="PROSITE" id="PS00359">
    <property type="entry name" value="RIBOSOMAL_L11"/>
    <property type="match status" value="1"/>
</dbReference>
<accession>C3P9P2</accession>
<evidence type="ECO:0000255" key="1">
    <source>
        <dbReference type="HAMAP-Rule" id="MF_00736"/>
    </source>
</evidence>
<evidence type="ECO:0000305" key="2"/>
<feature type="chain" id="PRO_1000195581" description="Large ribosomal subunit protein uL11">
    <location>
        <begin position="1"/>
        <end position="141"/>
    </location>
</feature>
<keyword id="KW-0488">Methylation</keyword>
<keyword id="KW-0687">Ribonucleoprotein</keyword>
<keyword id="KW-0689">Ribosomal protein</keyword>
<keyword id="KW-0694">RNA-binding</keyword>
<keyword id="KW-0699">rRNA-binding</keyword>
<protein>
    <recommendedName>
        <fullName evidence="1">Large ribosomal subunit protein uL11</fullName>
    </recommendedName>
    <alternativeName>
        <fullName evidence="2">50S ribosomal protein L11</fullName>
    </alternativeName>
</protein>
<name>RL11_BACAA</name>
<proteinExistence type="inferred from homology"/>
<comment type="function">
    <text evidence="1">Forms part of the ribosomal stalk which helps the ribosome interact with GTP-bound translation factors.</text>
</comment>
<comment type="subunit">
    <text evidence="1">Part of the ribosomal stalk of the 50S ribosomal subunit. Interacts with L10 and the large rRNA to form the base of the stalk. L10 forms an elongated spine to which L12 dimers bind in a sequential fashion forming a multimeric L10(L12)X complex.</text>
</comment>
<comment type="PTM">
    <text evidence="1">One or more lysine residues are methylated.</text>
</comment>
<comment type="similarity">
    <text evidence="1">Belongs to the universal ribosomal protein uL11 family.</text>
</comment>
<reference key="1">
    <citation type="submission" date="2009-04" db="EMBL/GenBank/DDBJ databases">
        <title>Genome sequence of Bacillus anthracis A0248.</title>
        <authorList>
            <person name="Dodson R.J."/>
            <person name="Munk A.C."/>
            <person name="Bruce D."/>
            <person name="Detter C."/>
            <person name="Tapia R."/>
            <person name="Sutton G."/>
            <person name="Sims D."/>
            <person name="Brettin T."/>
        </authorList>
    </citation>
    <scope>NUCLEOTIDE SEQUENCE [LARGE SCALE GENOMIC DNA]</scope>
    <source>
        <strain>A0248</strain>
    </source>
</reference>
<sequence length="141" mass="14976">MAKKVIKMVKLQIPAGKANPAPPVGPALGQAGVNIMGFCKEFNARTADQAGLIIPVEITVFEDRSFTFITKTPPAAVLLKKVAGIESGSGEPNRNKVATVKRDKVREIAETKMPDLNAASVEAAMRMVEGTARSMGIVIED</sequence>
<gene>
    <name evidence="1" type="primary">rplK</name>
    <name type="ordered locus">BAA_0112</name>
</gene>